<gene>
    <name evidence="1" type="primary">fadB</name>
    <name type="ordered locus">VIBHAR_00460</name>
</gene>
<accession>A7N1D2</accession>
<organism>
    <name type="scientific">Vibrio campbellii (strain ATCC BAA-1116)</name>
    <dbReference type="NCBI Taxonomy" id="2902295"/>
    <lineage>
        <taxon>Bacteria</taxon>
        <taxon>Pseudomonadati</taxon>
        <taxon>Pseudomonadota</taxon>
        <taxon>Gammaproteobacteria</taxon>
        <taxon>Vibrionales</taxon>
        <taxon>Vibrionaceae</taxon>
        <taxon>Vibrio</taxon>
    </lineage>
</organism>
<name>FADB_VIBC1</name>
<proteinExistence type="inferred from homology"/>
<evidence type="ECO:0000255" key="1">
    <source>
        <dbReference type="HAMAP-Rule" id="MF_01621"/>
    </source>
</evidence>
<comment type="function">
    <text evidence="1">Involved in the aerobic and anaerobic degradation of long-chain fatty acids via beta-oxidation cycle. Catalyzes the formation of 3-oxoacyl-CoA from enoyl-CoA via L-3-hydroxyacyl-CoA. It can also use D-3-hydroxyacyl-CoA and cis-3-enoyl-CoA as substrate.</text>
</comment>
<comment type="catalytic activity">
    <reaction evidence="1">
        <text>a (3S)-3-hydroxyacyl-CoA + NAD(+) = a 3-oxoacyl-CoA + NADH + H(+)</text>
        <dbReference type="Rhea" id="RHEA:22432"/>
        <dbReference type="ChEBI" id="CHEBI:15378"/>
        <dbReference type="ChEBI" id="CHEBI:57318"/>
        <dbReference type="ChEBI" id="CHEBI:57540"/>
        <dbReference type="ChEBI" id="CHEBI:57945"/>
        <dbReference type="ChEBI" id="CHEBI:90726"/>
        <dbReference type="EC" id="1.1.1.35"/>
    </reaction>
</comment>
<comment type="catalytic activity">
    <reaction evidence="1">
        <text>a (3S)-3-hydroxyacyl-CoA = a (2E)-enoyl-CoA + H2O</text>
        <dbReference type="Rhea" id="RHEA:16105"/>
        <dbReference type="ChEBI" id="CHEBI:15377"/>
        <dbReference type="ChEBI" id="CHEBI:57318"/>
        <dbReference type="ChEBI" id="CHEBI:58856"/>
        <dbReference type="EC" id="4.2.1.17"/>
    </reaction>
</comment>
<comment type="catalytic activity">
    <reaction evidence="1">
        <text>a 4-saturated-(3S)-3-hydroxyacyl-CoA = a (3E)-enoyl-CoA + H2O</text>
        <dbReference type="Rhea" id="RHEA:20724"/>
        <dbReference type="ChEBI" id="CHEBI:15377"/>
        <dbReference type="ChEBI" id="CHEBI:58521"/>
        <dbReference type="ChEBI" id="CHEBI:137480"/>
        <dbReference type="EC" id="4.2.1.17"/>
    </reaction>
</comment>
<comment type="catalytic activity">
    <reaction evidence="1">
        <text>(3S)-3-hydroxybutanoyl-CoA = (3R)-3-hydroxybutanoyl-CoA</text>
        <dbReference type="Rhea" id="RHEA:21760"/>
        <dbReference type="ChEBI" id="CHEBI:57315"/>
        <dbReference type="ChEBI" id="CHEBI:57316"/>
        <dbReference type="EC" id="5.1.2.3"/>
    </reaction>
</comment>
<comment type="catalytic activity">
    <reaction evidence="1">
        <text>a (3Z)-enoyl-CoA = a 4-saturated (2E)-enoyl-CoA</text>
        <dbReference type="Rhea" id="RHEA:45900"/>
        <dbReference type="ChEBI" id="CHEBI:85097"/>
        <dbReference type="ChEBI" id="CHEBI:85489"/>
        <dbReference type="EC" id="5.3.3.8"/>
    </reaction>
</comment>
<comment type="catalytic activity">
    <reaction evidence="1">
        <text>a (3E)-enoyl-CoA = a 4-saturated (2E)-enoyl-CoA</text>
        <dbReference type="Rhea" id="RHEA:45228"/>
        <dbReference type="ChEBI" id="CHEBI:58521"/>
        <dbReference type="ChEBI" id="CHEBI:85097"/>
        <dbReference type="EC" id="5.3.3.8"/>
    </reaction>
</comment>
<comment type="pathway">
    <text evidence="1">Lipid metabolism; fatty acid beta-oxidation.</text>
</comment>
<comment type="subunit">
    <text evidence="1">Heterotetramer of two alpha chains (FadB) and two beta chains (FadA).</text>
</comment>
<comment type="similarity">
    <text evidence="1">In the N-terminal section; belongs to the enoyl-CoA hydratase/isomerase family.</text>
</comment>
<comment type="similarity">
    <text evidence="1">In the C-terminal section; belongs to the 3-hydroxyacyl-CoA dehydrogenase family.</text>
</comment>
<protein>
    <recommendedName>
        <fullName evidence="1">Fatty acid oxidation complex subunit alpha</fullName>
    </recommendedName>
    <domain>
        <recommendedName>
            <fullName evidence="1">Enoyl-CoA hydratase/Delta(3)-cis-Delta(2)-trans-enoyl-CoA isomerase/3-hydroxybutyryl-CoA epimerase</fullName>
            <ecNumber evidence="1">4.2.1.17</ecNumber>
            <ecNumber evidence="1">5.1.2.3</ecNumber>
            <ecNumber evidence="1">5.3.3.8</ecNumber>
        </recommendedName>
    </domain>
    <domain>
        <recommendedName>
            <fullName evidence="1">3-hydroxyacyl-CoA dehydrogenase</fullName>
            <ecNumber evidence="1">1.1.1.35</ecNumber>
        </recommendedName>
    </domain>
</protein>
<feature type="chain" id="PRO_1000069583" description="Fatty acid oxidation complex subunit alpha">
    <location>
        <begin position="1"/>
        <end position="723"/>
    </location>
</feature>
<feature type="region of interest" description="Enoyl-CoA hydratase/isomerase" evidence="1">
    <location>
        <begin position="1"/>
        <end position="189"/>
    </location>
</feature>
<feature type="region of interest" description="3-hydroxyacyl-CoA dehydrogenase" evidence="1">
    <location>
        <begin position="311"/>
        <end position="723"/>
    </location>
</feature>
<feature type="active site" description="For 3-hydroxyacyl-CoA dehydrogenase activity" evidence="1">
    <location>
        <position position="451"/>
    </location>
</feature>
<feature type="binding site" evidence="1">
    <location>
        <position position="296"/>
    </location>
    <ligand>
        <name>substrate</name>
    </ligand>
</feature>
<feature type="binding site" evidence="1">
    <location>
        <position position="325"/>
    </location>
    <ligand>
        <name>NAD(+)</name>
        <dbReference type="ChEBI" id="CHEBI:57540"/>
    </ligand>
</feature>
<feature type="binding site" evidence="1">
    <location>
        <position position="344"/>
    </location>
    <ligand>
        <name>NAD(+)</name>
        <dbReference type="ChEBI" id="CHEBI:57540"/>
    </ligand>
</feature>
<feature type="binding site" evidence="1">
    <location>
        <begin position="401"/>
        <end position="403"/>
    </location>
    <ligand>
        <name>NAD(+)</name>
        <dbReference type="ChEBI" id="CHEBI:57540"/>
    </ligand>
</feature>
<feature type="binding site" evidence="1">
    <location>
        <position position="408"/>
    </location>
    <ligand>
        <name>NAD(+)</name>
        <dbReference type="ChEBI" id="CHEBI:57540"/>
    </ligand>
</feature>
<feature type="binding site" evidence="1">
    <location>
        <position position="430"/>
    </location>
    <ligand>
        <name>NAD(+)</name>
        <dbReference type="ChEBI" id="CHEBI:57540"/>
    </ligand>
</feature>
<feature type="binding site" evidence="1">
    <location>
        <position position="454"/>
    </location>
    <ligand>
        <name>NAD(+)</name>
        <dbReference type="ChEBI" id="CHEBI:57540"/>
    </ligand>
</feature>
<feature type="binding site" evidence="1">
    <location>
        <position position="501"/>
    </location>
    <ligand>
        <name>substrate</name>
    </ligand>
</feature>
<feature type="binding site" evidence="1">
    <location>
        <position position="661"/>
    </location>
    <ligand>
        <name>substrate</name>
    </ligand>
</feature>
<feature type="site" description="Important for catalytic activity" evidence="1">
    <location>
        <position position="119"/>
    </location>
</feature>
<feature type="site" description="Important for catalytic activity" evidence="1">
    <location>
        <position position="139"/>
    </location>
</feature>
<keyword id="KW-0276">Fatty acid metabolism</keyword>
<keyword id="KW-0413">Isomerase</keyword>
<keyword id="KW-0442">Lipid degradation</keyword>
<keyword id="KW-0443">Lipid metabolism</keyword>
<keyword id="KW-0456">Lyase</keyword>
<keyword id="KW-0511">Multifunctional enzyme</keyword>
<keyword id="KW-0520">NAD</keyword>
<keyword id="KW-0560">Oxidoreductase</keyword>
<sequence length="723" mass="78649">MIYQAETLQVKEVQDGIAELSFCSPKSVNKLDLATLESLDKALDALKAHQGLKGLMLTSDKDAFIVGADITEFLGLFAKTDAELDQWLQFANSIFNKLEDLPVPTISVLKGHTLGGGCECVLATDMRIGDKTTSIGLPETKLGIMPGFGGCVRLPRVIGADSAMEVITQGKACRADEALKIGLLDAVVDSDALYESALKTLTSAINEKLDWQARRKQKTSPLTLSKLESMMSFTMAKGLVAQKAGPHYPAPMTAVITIEEGARFARNEALDIERKHFVKLAKSEEAKSLVGLFLNDQYIKGLAKKSAKSASKDTQRAAVLGAGIMGGGIAYQSALKGVPVLMKDIAQPSLDLGMTEASKLLNKRLSRGRIDGFKMAGILASITPSLHYTGIEESDVIVEAVVENPKVKAAVLSEVESHVGEDTVITSNTSTIPINLLAKSLKRPENFCGMHFFNPVHRMPLVEIIRGEHTSDETINRVVAYAAKMGKSPIVVNDCPGFFVNRVLFPYFGGFSMLLRDGADFTKIDKIMERKFGWPMGPAYLLDVVGIDTAHHAQAVMAQGFPERMGKQGRDAIDALFEASKYGQKNGSGFYSYTIDRKGKPKKTFSEEILPVLADVCTDKQDFDDQTIIQRMMIPMINEVVLCLQEGIIATPQEADMTLVYGLGFPPFRGGVFRYLDSVGIAEFVAMAKQYSELGAMYQVPQMLIDMAAKGESFYGAQQQGSI</sequence>
<reference key="1">
    <citation type="submission" date="2007-08" db="EMBL/GenBank/DDBJ databases">
        <authorList>
            <consortium name="The Vibrio harveyi Genome Sequencing Project"/>
            <person name="Bassler B."/>
            <person name="Clifton S.W."/>
            <person name="Fulton L."/>
            <person name="Delehaunty K."/>
            <person name="Fronick C."/>
            <person name="Harrison M."/>
            <person name="Markivic C."/>
            <person name="Fulton R."/>
            <person name="Tin-Wollam A.-M."/>
            <person name="Shah N."/>
            <person name="Pepin K."/>
            <person name="Nash W."/>
            <person name="Thiruvilangam P."/>
            <person name="Bhonagiri V."/>
            <person name="Waters C."/>
            <person name="Tu K.C."/>
            <person name="Irgon J."/>
            <person name="Wilson R.K."/>
        </authorList>
    </citation>
    <scope>NUCLEOTIDE SEQUENCE [LARGE SCALE GENOMIC DNA]</scope>
    <source>
        <strain>ATCC BAA-1116 / BB120</strain>
    </source>
</reference>
<dbReference type="EC" id="4.2.1.17" evidence="1"/>
<dbReference type="EC" id="5.1.2.3" evidence="1"/>
<dbReference type="EC" id="5.3.3.8" evidence="1"/>
<dbReference type="EC" id="1.1.1.35" evidence="1"/>
<dbReference type="EMBL" id="CP000789">
    <property type="protein sequence ID" value="ABU69475.1"/>
    <property type="molecule type" value="Genomic_DNA"/>
</dbReference>
<dbReference type="RefSeq" id="WP_012126677.1">
    <property type="nucleotide sequence ID" value="NC_009783.1"/>
</dbReference>
<dbReference type="SMR" id="A7N1D2"/>
<dbReference type="KEGG" id="vha:VIBHAR_00460"/>
<dbReference type="PATRIC" id="fig|338187.25.peg.2128"/>
<dbReference type="UniPathway" id="UPA00659"/>
<dbReference type="Proteomes" id="UP000008152">
    <property type="component" value="Chromosome I"/>
</dbReference>
<dbReference type="GO" id="GO:0036125">
    <property type="term" value="C:fatty acid beta-oxidation multienzyme complex"/>
    <property type="evidence" value="ECO:0007669"/>
    <property type="project" value="InterPro"/>
</dbReference>
<dbReference type="GO" id="GO:0008692">
    <property type="term" value="F:3-hydroxybutyryl-CoA epimerase activity"/>
    <property type="evidence" value="ECO:0007669"/>
    <property type="project" value="UniProtKB-UniRule"/>
</dbReference>
<dbReference type="GO" id="GO:0004165">
    <property type="term" value="F:delta(3)-delta(2)-enoyl-CoA isomerase activity"/>
    <property type="evidence" value="ECO:0007669"/>
    <property type="project" value="UniProtKB-UniRule"/>
</dbReference>
<dbReference type="GO" id="GO:0004300">
    <property type="term" value="F:enoyl-CoA hydratase activity"/>
    <property type="evidence" value="ECO:0007669"/>
    <property type="project" value="UniProtKB-UniRule"/>
</dbReference>
<dbReference type="GO" id="GO:0016509">
    <property type="term" value="F:long-chain-3-hydroxyacyl-CoA dehydrogenase activity"/>
    <property type="evidence" value="ECO:0007669"/>
    <property type="project" value="TreeGrafter"/>
</dbReference>
<dbReference type="GO" id="GO:0070403">
    <property type="term" value="F:NAD+ binding"/>
    <property type="evidence" value="ECO:0007669"/>
    <property type="project" value="InterPro"/>
</dbReference>
<dbReference type="GO" id="GO:0006635">
    <property type="term" value="P:fatty acid beta-oxidation"/>
    <property type="evidence" value="ECO:0007669"/>
    <property type="project" value="UniProtKB-UniRule"/>
</dbReference>
<dbReference type="CDD" id="cd06558">
    <property type="entry name" value="crotonase-like"/>
    <property type="match status" value="1"/>
</dbReference>
<dbReference type="FunFam" id="3.40.50.720:FF:000009">
    <property type="entry name" value="Fatty oxidation complex, alpha subunit"/>
    <property type="match status" value="1"/>
</dbReference>
<dbReference type="Gene3D" id="1.10.1040.50">
    <property type="match status" value="1"/>
</dbReference>
<dbReference type="Gene3D" id="3.90.226.10">
    <property type="entry name" value="2-enoyl-CoA Hydratase, Chain A, domain 1"/>
    <property type="match status" value="1"/>
</dbReference>
<dbReference type="Gene3D" id="3.40.50.720">
    <property type="entry name" value="NAD(P)-binding Rossmann-like Domain"/>
    <property type="match status" value="1"/>
</dbReference>
<dbReference type="HAMAP" id="MF_01621">
    <property type="entry name" value="FadB"/>
    <property type="match status" value="1"/>
</dbReference>
<dbReference type="InterPro" id="IPR006180">
    <property type="entry name" value="3-OHacyl-CoA_DH_CS"/>
</dbReference>
<dbReference type="InterPro" id="IPR006176">
    <property type="entry name" value="3-OHacyl-CoA_DH_NAD-bd"/>
</dbReference>
<dbReference type="InterPro" id="IPR006108">
    <property type="entry name" value="3HC_DH_C"/>
</dbReference>
<dbReference type="InterPro" id="IPR008927">
    <property type="entry name" value="6-PGluconate_DH-like_C_sf"/>
</dbReference>
<dbReference type="InterPro" id="IPR029045">
    <property type="entry name" value="ClpP/crotonase-like_dom_sf"/>
</dbReference>
<dbReference type="InterPro" id="IPR001753">
    <property type="entry name" value="Enoyl-CoA_hydra/iso"/>
</dbReference>
<dbReference type="InterPro" id="IPR050136">
    <property type="entry name" value="FA_oxidation_alpha_subunit"/>
</dbReference>
<dbReference type="InterPro" id="IPR012799">
    <property type="entry name" value="FadB"/>
</dbReference>
<dbReference type="InterPro" id="IPR036291">
    <property type="entry name" value="NAD(P)-bd_dom_sf"/>
</dbReference>
<dbReference type="NCBIfam" id="TIGR02437">
    <property type="entry name" value="FadB"/>
    <property type="match status" value="1"/>
</dbReference>
<dbReference type="NCBIfam" id="NF008727">
    <property type="entry name" value="PRK11730.1"/>
    <property type="match status" value="1"/>
</dbReference>
<dbReference type="PANTHER" id="PTHR43612">
    <property type="entry name" value="TRIFUNCTIONAL ENZYME SUBUNIT ALPHA"/>
    <property type="match status" value="1"/>
</dbReference>
<dbReference type="PANTHER" id="PTHR43612:SF3">
    <property type="entry name" value="TRIFUNCTIONAL ENZYME SUBUNIT ALPHA, MITOCHONDRIAL"/>
    <property type="match status" value="1"/>
</dbReference>
<dbReference type="Pfam" id="PF00725">
    <property type="entry name" value="3HCDH"/>
    <property type="match status" value="2"/>
</dbReference>
<dbReference type="Pfam" id="PF02737">
    <property type="entry name" value="3HCDH_N"/>
    <property type="match status" value="1"/>
</dbReference>
<dbReference type="Pfam" id="PF00378">
    <property type="entry name" value="ECH_1"/>
    <property type="match status" value="1"/>
</dbReference>
<dbReference type="SUPFAM" id="SSF48179">
    <property type="entry name" value="6-phosphogluconate dehydrogenase C-terminal domain-like"/>
    <property type="match status" value="2"/>
</dbReference>
<dbReference type="SUPFAM" id="SSF52096">
    <property type="entry name" value="ClpP/crotonase"/>
    <property type="match status" value="1"/>
</dbReference>
<dbReference type="SUPFAM" id="SSF51735">
    <property type="entry name" value="NAD(P)-binding Rossmann-fold domains"/>
    <property type="match status" value="1"/>
</dbReference>
<dbReference type="PROSITE" id="PS00067">
    <property type="entry name" value="3HCDH"/>
    <property type="match status" value="1"/>
</dbReference>